<name>COLE_LEPMA</name>
<feature type="signal peptide" evidence="2">
    <location>
        <begin position="1"/>
        <end position="19"/>
    </location>
</feature>
<feature type="chain" id="PRO_0000005712" description="Inner ear-specific collagen">
    <location>
        <begin position="20"/>
        <end position="419"/>
    </location>
</feature>
<feature type="domain" description="C1q" evidence="3">
    <location>
        <begin position="275"/>
        <end position="412"/>
    </location>
</feature>
<feature type="region of interest" description="Nonhelical region (NC2)">
    <location>
        <begin position="20"/>
        <end position="57"/>
    </location>
</feature>
<feature type="region of interest" description="Triple-helical region (COL1)">
    <location>
        <begin position="58"/>
        <end position="274"/>
    </location>
</feature>
<feature type="region of interest" description="Disordered" evidence="4">
    <location>
        <begin position="63"/>
        <end position="275"/>
    </location>
</feature>
<feature type="region of interest" description="Nonhelical region (NC1)">
    <location>
        <begin position="275"/>
        <end position="419"/>
    </location>
</feature>
<feature type="compositionally biased region" description="Basic and acidic residues" evidence="4">
    <location>
        <begin position="129"/>
        <end position="144"/>
    </location>
</feature>
<feature type="compositionally biased region" description="Basic and acidic residues" evidence="4">
    <location>
        <begin position="184"/>
        <end position="202"/>
    </location>
</feature>
<feature type="compositionally biased region" description="Gly residues" evidence="4">
    <location>
        <begin position="227"/>
        <end position="236"/>
    </location>
</feature>
<feature type="glycosylation site" description="N-linked (GlcNAc...) asparagine" evidence="2">
    <location>
        <position position="37"/>
    </location>
</feature>
<feature type="glycosylation site" description="N-linked (GlcNAc...) asparagine" evidence="2">
    <location>
        <position position="320"/>
    </location>
</feature>
<reference key="1">
    <citation type="journal article" date="1995" name="Science">
        <title>Molecular cloning and characterization of an inner ear-specific structural protein.</title>
        <authorList>
            <person name="Davis J.G."/>
            <person name="Oberholtzer J.C."/>
            <person name="Burns F.R."/>
            <person name="Greene M.I."/>
        </authorList>
    </citation>
    <scope>NUCLEOTIDE SEQUENCE [MRNA]</scope>
</reference>
<proteinExistence type="evidence at transcript level"/>
<organism>
    <name type="scientific">Lepomis macrochirus</name>
    <name type="common">Bluegill</name>
    <name type="synonym">Eupomotis macrochirus</name>
    <dbReference type="NCBI Taxonomy" id="13106"/>
    <lineage>
        <taxon>Eukaryota</taxon>
        <taxon>Metazoa</taxon>
        <taxon>Chordata</taxon>
        <taxon>Craniata</taxon>
        <taxon>Vertebrata</taxon>
        <taxon>Euteleostomi</taxon>
        <taxon>Actinopterygii</taxon>
        <taxon>Neopterygii</taxon>
        <taxon>Teleostei</taxon>
        <taxon>Neoteleostei</taxon>
        <taxon>Acanthomorphata</taxon>
        <taxon>Eupercaria</taxon>
        <taxon>Centrarchiformes</taxon>
        <taxon>Centrarchoidei</taxon>
        <taxon>Centrarchidae</taxon>
        <taxon>Lepomis</taxon>
    </lineage>
</organism>
<accession>P98085</accession>
<accession>Q91080</accession>
<comment type="function">
    <text evidence="5">Forms a microstructural matrix within the otolithic membrane.</text>
</comment>
<comment type="subcellular location">
    <subcellularLocation>
        <location evidence="1">Secreted</location>
        <location evidence="1">Extracellular space</location>
        <location evidence="1">Extracellular matrix</location>
    </subcellularLocation>
</comment>
<comment type="tissue specificity">
    <text>Specialized secretory supporting cells at the outer perimeter of the saccular epithelium.</text>
</comment>
<comment type="sequence caution" evidence="5">
    <conflict type="frameshift">
        <sequence resource="EMBL-CDS" id="AAA69978"/>
    </conflict>
</comment>
<evidence type="ECO:0000250" key="1"/>
<evidence type="ECO:0000255" key="2"/>
<evidence type="ECO:0000255" key="3">
    <source>
        <dbReference type="PROSITE-ProRule" id="PRU00368"/>
    </source>
</evidence>
<evidence type="ECO:0000256" key="4">
    <source>
        <dbReference type="SAM" id="MobiDB-lite"/>
    </source>
</evidence>
<evidence type="ECO:0000305" key="5"/>
<protein>
    <recommendedName>
        <fullName>Inner ear-specific collagen</fullName>
    </recommendedName>
    <alternativeName>
        <fullName>Saccular collagen</fullName>
    </alternativeName>
</protein>
<keyword id="KW-0176">Collagen</keyword>
<keyword id="KW-0272">Extracellular matrix</keyword>
<keyword id="KW-0325">Glycoprotein</keyword>
<keyword id="KW-0677">Repeat</keyword>
<keyword id="KW-0964">Secreted</keyword>
<keyword id="KW-0732">Signal</keyword>
<sequence>MDAYSLSPTDSTTYSSDTFSTEFHTDAIAPPGNTPGNYTLDYNECFFNFCECCPPEKGPMGPMGERGLPGPPGERGPLGLPGEKGETGLRGPPGPAGLPGANGLNGDIGEKGDQGPVGLPGVPGIPGKPGEKGDPGLKGDKGERGFSGLKGDPGERGEPGLNGTKGSIGREGPMGPGLAGTKGLKGEQGLKGECLQGEKGERGPPGLRGEMGLNGTDGVKGERGEPGPLGGKGDTGARGPPGPPGGRGMAGLRGEKGLKGVRGPRGPKGPPGESVEQIRSAFSVGLFPSRSFPPPSLPVKFDKVFYNGEGHWDPTLNKFNVTYPGVYLFSYHITVRNRPVRAALVVNGVRKLRTRDSLYGQDIDQASNLALLHLTDGDQVWLETLRDWNGXYSSSEDDSTFSGFLLYPDTKKPTAMENL</sequence>
<dbReference type="EMBL" id="U17431">
    <property type="protein sequence ID" value="AAA69978.1"/>
    <property type="status" value="ALT_FRAME"/>
    <property type="molecule type" value="mRNA"/>
</dbReference>
<dbReference type="PIR" id="A55797">
    <property type="entry name" value="A55797"/>
</dbReference>
<dbReference type="GO" id="GO:0005581">
    <property type="term" value="C:collagen trimer"/>
    <property type="evidence" value="ECO:0007669"/>
    <property type="project" value="UniProtKB-KW"/>
</dbReference>
<dbReference type="GO" id="GO:0005576">
    <property type="term" value="C:extracellular region"/>
    <property type="evidence" value="ECO:0007669"/>
    <property type="project" value="UniProtKB-KW"/>
</dbReference>
<dbReference type="FunFam" id="2.60.120.40:FF:000001">
    <property type="entry name" value="Complement C1q B chain"/>
    <property type="match status" value="1"/>
</dbReference>
<dbReference type="Gene3D" id="2.60.120.40">
    <property type="match status" value="1"/>
</dbReference>
<dbReference type="InterPro" id="IPR001073">
    <property type="entry name" value="C1q_dom"/>
</dbReference>
<dbReference type="InterPro" id="IPR008160">
    <property type="entry name" value="Collagen"/>
</dbReference>
<dbReference type="InterPro" id="IPR050392">
    <property type="entry name" value="Collagen/C1q_domain"/>
</dbReference>
<dbReference type="InterPro" id="IPR008983">
    <property type="entry name" value="Tumour_necrosis_fac-like_dom"/>
</dbReference>
<dbReference type="PANTHER" id="PTHR15427:SF52">
    <property type="entry name" value="C1Q DOMAIN-CONTAINING PROTEIN"/>
    <property type="match status" value="1"/>
</dbReference>
<dbReference type="PANTHER" id="PTHR15427">
    <property type="entry name" value="EMILIN ELASTIN MICROFIBRIL INTERFACE-LOCATED PROTEIN ELASTIN MICROFIBRIL INTERFACER"/>
    <property type="match status" value="1"/>
</dbReference>
<dbReference type="Pfam" id="PF00386">
    <property type="entry name" value="C1q"/>
    <property type="match status" value="1"/>
</dbReference>
<dbReference type="Pfam" id="PF01391">
    <property type="entry name" value="Collagen"/>
    <property type="match status" value="3"/>
</dbReference>
<dbReference type="PRINTS" id="PR00007">
    <property type="entry name" value="COMPLEMNTC1Q"/>
</dbReference>
<dbReference type="SMART" id="SM00110">
    <property type="entry name" value="C1Q"/>
    <property type="match status" value="1"/>
</dbReference>
<dbReference type="SUPFAM" id="SSF49842">
    <property type="entry name" value="TNF-like"/>
    <property type="match status" value="1"/>
</dbReference>
<dbReference type="PROSITE" id="PS50871">
    <property type="entry name" value="C1Q"/>
    <property type="match status" value="1"/>
</dbReference>